<sequence>MRFRGLDLNLLVALDALMTERKLTAAARRINLSQPAMSAAIARLRTYFGDELFSMQGRELIPTPRAEALAPAVRDALLHIQLSVIAWDPLNPAQSDRRFRIILSDFMILVFFARIVERVAREAPGVSFELLPLDDDPHELLRRGDVDFLIFPDVFMSSAHPKAKLFDEALVCVGCPTNKKLLGNISFETYMSMGHVAAQFGREMKPSVEQWLLLEHGFNRRIELVVPGFTLIPRLLSGTNRIATLPLRLVKYFEQTIPLRIVTSPLPPLFFTEAIQWPALHNTDPGNIWLREILLQEASRIDPQSDTC</sequence>
<dbReference type="EMBL" id="M11268">
    <property type="protein sequence ID" value="AAA98359.1"/>
    <property type="molecule type" value="Genomic_DNA"/>
</dbReference>
<dbReference type="EMBL" id="X04473">
    <property type="protein sequence ID" value="CAA28161.1"/>
    <property type="molecule type" value="Genomic_DNA"/>
</dbReference>
<dbReference type="EMBL" id="AE006469">
    <property type="protein sequence ID" value="AAK65134.1"/>
    <property type="molecule type" value="Genomic_DNA"/>
</dbReference>
<dbReference type="EMBL" id="M18272">
    <property type="protein sequence ID" value="AAA88518.1"/>
    <property type="molecule type" value="Genomic_DNA"/>
</dbReference>
<dbReference type="PIR" id="A03566">
    <property type="entry name" value="ZZZRDM"/>
</dbReference>
<dbReference type="PIR" id="D95321">
    <property type="entry name" value="D95321"/>
</dbReference>
<dbReference type="RefSeq" id="NP_435722.1">
    <property type="nucleotide sequence ID" value="NC_003037.1"/>
</dbReference>
<dbReference type="RefSeq" id="WP_010967456.1">
    <property type="nucleotide sequence ID" value="NC_003037.1"/>
</dbReference>
<dbReference type="SMR" id="P03031"/>
<dbReference type="EnsemblBacteria" id="AAK65134">
    <property type="protein sequence ID" value="AAK65134"/>
    <property type="gene ID" value="SMa0870"/>
</dbReference>
<dbReference type="KEGG" id="sme:SMa0870"/>
<dbReference type="PATRIC" id="fig|266834.11.peg.487"/>
<dbReference type="HOGENOM" id="CLU_039613_39_0_5"/>
<dbReference type="OrthoDB" id="8339333at2"/>
<dbReference type="PRO" id="PR:P03031"/>
<dbReference type="Proteomes" id="UP000001976">
    <property type="component" value="Plasmid pSymA"/>
</dbReference>
<dbReference type="CollecTF" id="EXPREG_000006d0"/>
<dbReference type="GO" id="GO:0032993">
    <property type="term" value="C:protein-DNA complex"/>
    <property type="evidence" value="ECO:0000353"/>
    <property type="project" value="CollecTF"/>
</dbReference>
<dbReference type="GO" id="GO:0001216">
    <property type="term" value="F:DNA-binding transcription activator activity"/>
    <property type="evidence" value="ECO:0000353"/>
    <property type="project" value="CollecTF"/>
</dbReference>
<dbReference type="GO" id="GO:0000976">
    <property type="term" value="F:transcription cis-regulatory region binding"/>
    <property type="evidence" value="ECO:0000353"/>
    <property type="project" value="CollecTF"/>
</dbReference>
<dbReference type="CDD" id="cd08462">
    <property type="entry name" value="PBP2_NodD"/>
    <property type="match status" value="1"/>
</dbReference>
<dbReference type="Gene3D" id="3.40.190.10">
    <property type="entry name" value="Periplasmic binding protein-like II"/>
    <property type="match status" value="2"/>
</dbReference>
<dbReference type="Gene3D" id="1.10.10.10">
    <property type="entry name" value="Winged helix-like DNA-binding domain superfamily/Winged helix DNA-binding domain"/>
    <property type="match status" value="1"/>
</dbReference>
<dbReference type="InterPro" id="IPR050389">
    <property type="entry name" value="LysR-type_TF"/>
</dbReference>
<dbReference type="InterPro" id="IPR005119">
    <property type="entry name" value="LysR_subst-bd"/>
</dbReference>
<dbReference type="InterPro" id="IPR037416">
    <property type="entry name" value="NodD_PBP2"/>
</dbReference>
<dbReference type="InterPro" id="IPR000847">
    <property type="entry name" value="Tscrpt_reg_HTH_LysR"/>
</dbReference>
<dbReference type="InterPro" id="IPR036388">
    <property type="entry name" value="WH-like_DNA-bd_sf"/>
</dbReference>
<dbReference type="InterPro" id="IPR036390">
    <property type="entry name" value="WH_DNA-bd_sf"/>
</dbReference>
<dbReference type="PANTHER" id="PTHR30118:SF6">
    <property type="entry name" value="HTH-TYPE TRANSCRIPTIONAL REGULATOR LEUO"/>
    <property type="match status" value="1"/>
</dbReference>
<dbReference type="PANTHER" id="PTHR30118">
    <property type="entry name" value="HTH-TYPE TRANSCRIPTIONAL REGULATOR LEUO-RELATED"/>
    <property type="match status" value="1"/>
</dbReference>
<dbReference type="Pfam" id="PF00126">
    <property type="entry name" value="HTH_1"/>
    <property type="match status" value="1"/>
</dbReference>
<dbReference type="Pfam" id="PF03466">
    <property type="entry name" value="LysR_substrate"/>
    <property type="match status" value="1"/>
</dbReference>
<dbReference type="PRINTS" id="PR00039">
    <property type="entry name" value="HTHLYSR"/>
</dbReference>
<dbReference type="SUPFAM" id="SSF53850">
    <property type="entry name" value="Periplasmic binding protein-like II"/>
    <property type="match status" value="1"/>
</dbReference>
<dbReference type="SUPFAM" id="SSF46785">
    <property type="entry name" value="Winged helix' DNA-binding domain"/>
    <property type="match status" value="1"/>
</dbReference>
<dbReference type="PROSITE" id="PS50931">
    <property type="entry name" value="HTH_LYSR"/>
    <property type="match status" value="1"/>
</dbReference>
<accession>P03031</accession>
<geneLocation type="plasmid">
    <name>pSymA</name>
    <name>megaplasmid 1</name>
</geneLocation>
<protein>
    <recommendedName>
        <fullName>Nodulation protein D 1</fullName>
    </recommendedName>
</protein>
<gene>
    <name type="primary">nodD1</name>
    <name type="ordered locus">RA0476</name>
    <name type="ORF">SMa0870</name>
</gene>
<name>NODD1_RHIME</name>
<feature type="chain" id="PRO_0000105718" description="Nodulation protein D 1">
    <location>
        <begin position="1"/>
        <end position="308"/>
    </location>
</feature>
<feature type="domain" description="HTH lysR-type" evidence="1">
    <location>
        <begin position="6"/>
        <end position="63"/>
    </location>
</feature>
<feature type="DNA-binding region" description="H-T-H motif" evidence="1">
    <location>
        <begin position="23"/>
        <end position="42"/>
    </location>
</feature>
<comment type="function">
    <text evidence="2">NodD regulates the expression of the nodABCFE genes which encode other nodulation proteins. NodD is also a negative regulator of its own expression. Binds flavonoids as inducers.</text>
</comment>
<comment type="miscellaneous">
    <text>There are at least three nodD genes in R.meliloti. They differ in their specificity of interaction with different flavonoids and, consequently, contribute to the nodulation of various plant host species to different extents.</text>
</comment>
<comment type="similarity">
    <text evidence="3">Belongs to the LysR transcriptional regulatory family.</text>
</comment>
<evidence type="ECO:0000255" key="1">
    <source>
        <dbReference type="PROSITE-ProRule" id="PRU00253"/>
    </source>
</evidence>
<evidence type="ECO:0000269" key="2">
    <source ref="7"/>
</evidence>
<evidence type="ECO:0000305" key="3"/>
<proteinExistence type="inferred from homology"/>
<keyword id="KW-0010">Activator</keyword>
<keyword id="KW-0238">DNA-binding</keyword>
<keyword id="KW-0536">Nodulation</keyword>
<keyword id="KW-0614">Plasmid</keyword>
<keyword id="KW-1185">Reference proteome</keyword>
<keyword id="KW-0678">Repressor</keyword>
<keyword id="KW-0804">Transcription</keyword>
<keyword id="KW-0805">Transcription regulation</keyword>
<reference key="1">
    <citation type="journal article" date="1985" name="DNA">
        <title>Nucleotide sequence of Rhizobium meliloti 1021 nodulation genes: nodD is read divergently from nodABC.</title>
        <authorList>
            <person name="Egelhoff T.T."/>
            <person name="Fisher R.F."/>
            <person name="Jacobs T.W."/>
            <person name="Mulligan J.T."/>
            <person name="Long S.R."/>
        </authorList>
    </citation>
    <scope>NUCLEOTIDE SEQUENCE [GENOMIC DNA]</scope>
    <source>
        <strain>1021</strain>
    </source>
</reference>
<reference key="2">
    <citation type="journal article" date="1986" name="J. Mol. Biol.">
        <title>At least two nodD genes are necessary for efficient nodulation of alfalfa by Rhizobium meliloti.</title>
        <authorList>
            <person name="Goettfert M."/>
            <person name="Horvath B."/>
            <person name="Kondorosi E."/>
            <person name="Putnoky P."/>
            <person name="Rodriguez-Quinones F."/>
            <person name="Kondorosi A."/>
        </authorList>
    </citation>
    <scope>NUCLEOTIDE SEQUENCE [GENOMIC DNA]</scope>
    <source>
        <strain>41</strain>
    </source>
</reference>
<reference key="3">
    <citation type="journal article" date="2001" name="Proc. Natl. Acad. Sci. U.S.A.">
        <title>Nucleotide sequence and predicted functions of the entire Sinorhizobium meliloti pSymA megaplasmid.</title>
        <authorList>
            <person name="Barnett M.J."/>
            <person name="Fisher R.F."/>
            <person name="Jones T."/>
            <person name="Komp C."/>
            <person name="Abola A.P."/>
            <person name="Barloy-Hubler F."/>
            <person name="Bowser L."/>
            <person name="Capela D."/>
            <person name="Galibert F."/>
            <person name="Gouzy J."/>
            <person name="Gurjal M."/>
            <person name="Hong A."/>
            <person name="Huizar L."/>
            <person name="Hyman R.W."/>
            <person name="Kahn D."/>
            <person name="Kahn M.L."/>
            <person name="Kalman S."/>
            <person name="Keating D.H."/>
            <person name="Palm C."/>
            <person name="Peck M.C."/>
            <person name="Surzycki R."/>
            <person name="Wells D.H."/>
            <person name="Yeh K.-C."/>
            <person name="Davis R.W."/>
            <person name="Federspiel N.A."/>
            <person name="Long S.R."/>
        </authorList>
    </citation>
    <scope>NUCLEOTIDE SEQUENCE [LARGE SCALE GENOMIC DNA]</scope>
    <source>
        <strain>1021</strain>
    </source>
</reference>
<reference key="4">
    <citation type="journal article" date="2001" name="Science">
        <title>The composite genome of the legume symbiont Sinorhizobium meliloti.</title>
        <authorList>
            <person name="Galibert F."/>
            <person name="Finan T.M."/>
            <person name="Long S.R."/>
            <person name="Puehler A."/>
            <person name="Abola P."/>
            <person name="Ampe F."/>
            <person name="Barloy-Hubler F."/>
            <person name="Barnett M.J."/>
            <person name="Becker A."/>
            <person name="Boistard P."/>
            <person name="Bothe G."/>
            <person name="Boutry M."/>
            <person name="Bowser L."/>
            <person name="Buhrmester J."/>
            <person name="Cadieu E."/>
            <person name="Capela D."/>
            <person name="Chain P."/>
            <person name="Cowie A."/>
            <person name="Davis R.W."/>
            <person name="Dreano S."/>
            <person name="Federspiel N.A."/>
            <person name="Fisher R.F."/>
            <person name="Gloux S."/>
            <person name="Godrie T."/>
            <person name="Goffeau A."/>
            <person name="Golding B."/>
            <person name="Gouzy J."/>
            <person name="Gurjal M."/>
            <person name="Hernandez-Lucas I."/>
            <person name="Hong A."/>
            <person name="Huizar L."/>
            <person name="Hyman R.W."/>
            <person name="Jones T."/>
            <person name="Kahn D."/>
            <person name="Kahn M.L."/>
            <person name="Kalman S."/>
            <person name="Keating D.H."/>
            <person name="Kiss E."/>
            <person name="Komp C."/>
            <person name="Lelaure V."/>
            <person name="Masuy D."/>
            <person name="Palm C."/>
            <person name="Peck M.C."/>
            <person name="Pohl T.M."/>
            <person name="Portetelle D."/>
            <person name="Purnelle B."/>
            <person name="Ramsperger U."/>
            <person name="Surzycki R."/>
            <person name="Thebault P."/>
            <person name="Vandenbol M."/>
            <person name="Vorhoelter F.J."/>
            <person name="Weidner S."/>
            <person name="Wells D.H."/>
            <person name="Wong K."/>
            <person name="Yeh K.-C."/>
            <person name="Batut J."/>
        </authorList>
    </citation>
    <scope>NUCLEOTIDE SEQUENCE [LARGE SCALE GENOMIC DNA]</scope>
    <source>
        <strain>1021</strain>
    </source>
</reference>
<reference key="5">
    <citation type="journal article" date="1984" name="Nucleic Acids Res.">
        <title>Nucleotide sequence of Rhizobium meliloti nodulation genes.</title>
        <authorList>
            <person name="Toeroek I."/>
            <person name="Kondorosi E."/>
            <person name="Stepkowski T."/>
            <person name="Posfai J."/>
            <person name="Kondorosi A."/>
        </authorList>
    </citation>
    <scope>NUCLEOTIDE SEQUENCE [GENOMIC DNA] OF 1-5</scope>
    <source>
        <strain>41</strain>
    </source>
</reference>
<reference key="6">
    <citation type="journal article" date="1987" name="J. Bacteriol.">
        <title>Rhizobium meliloti nifN (fixF) gene is part of an operon regulated by a nifA-dependent promoter and codes for a polypeptide homologous to the nifK gene product.</title>
        <authorList>
            <person name="Aguilar O.M."/>
            <person name="Reilaender H."/>
            <person name="Arnold W."/>
            <person name="Puehler A."/>
        </authorList>
    </citation>
    <scope>NUCLEOTIDE SEQUENCE [GENOMIC DNA] OF 88-308</scope>
</reference>
<reference key="7">
    <citation type="journal article" date="1989" name="Plant Mol. Biol.">
        <title>Localization of functional regions of the Rhizobium nodD product using hybrid nodD genes.</title>
        <authorList>
            <person name="Spaink H.P."/>
            <person name="Wijffelman C.A."/>
            <person name="Okker R.J.H."/>
            <person name="Lugtenberg B.E.J."/>
        </authorList>
    </citation>
    <scope>FUNCTIONAL REGIONS</scope>
</reference>
<organism>
    <name type="scientific">Rhizobium meliloti (strain 1021)</name>
    <name type="common">Ensifer meliloti</name>
    <name type="synonym">Sinorhizobium meliloti</name>
    <dbReference type="NCBI Taxonomy" id="266834"/>
    <lineage>
        <taxon>Bacteria</taxon>
        <taxon>Pseudomonadati</taxon>
        <taxon>Pseudomonadota</taxon>
        <taxon>Alphaproteobacteria</taxon>
        <taxon>Hyphomicrobiales</taxon>
        <taxon>Rhizobiaceae</taxon>
        <taxon>Sinorhizobium/Ensifer group</taxon>
        <taxon>Sinorhizobium</taxon>
    </lineage>
</organism>